<keyword id="KW-0028">Amino-acid biosynthesis</keyword>
<keyword id="KW-0150">Chloroplast</keyword>
<keyword id="KW-0368">Histidine biosynthesis</keyword>
<keyword id="KW-0456">Lyase</keyword>
<keyword id="KW-0464">Manganese</keyword>
<keyword id="KW-0479">Metal-binding</keyword>
<keyword id="KW-0934">Plastid</keyword>
<keyword id="KW-1185">Reference proteome</keyword>
<keyword id="KW-0809">Transit peptide</keyword>
<sequence length="269" mass="28501">MTTAPVVSPSLSRLHSAPASPFPKAPVGSGAGVAFPARPYGPSLRLRSAVMAASGVGGNGSPMAPEESAVSSRLGEVKRVTKETNVHVKINLDGTGVANSSTGIPFLDHMLDQLASHGLFDVYVKATGDTHIDDHHSNEDIALAIGTALLQALGDRKGINRFGHFTAPLDEAAVEVILDLSGRPHLSCGLSIPTERVGTYDTQLVEHFFQSLVNTSGMTLHIRQLAGNNSHHIIEATFKAFARALRQATEYDLRRRGTIPSSKGVLSRS</sequence>
<proteinExistence type="inferred from homology"/>
<evidence type="ECO:0000250" key="1">
    <source>
        <dbReference type="UniProtKB" id="O23346"/>
    </source>
</evidence>
<evidence type="ECO:0000255" key="2"/>
<evidence type="ECO:0000305" key="3"/>
<organism>
    <name type="scientific">Triticum aestivum</name>
    <name type="common">Wheat</name>
    <dbReference type="NCBI Taxonomy" id="4565"/>
    <lineage>
        <taxon>Eukaryota</taxon>
        <taxon>Viridiplantae</taxon>
        <taxon>Streptophyta</taxon>
        <taxon>Embryophyta</taxon>
        <taxon>Tracheophyta</taxon>
        <taxon>Spermatophyta</taxon>
        <taxon>Magnoliopsida</taxon>
        <taxon>Liliopsida</taxon>
        <taxon>Poales</taxon>
        <taxon>Poaceae</taxon>
        <taxon>BOP clade</taxon>
        <taxon>Pooideae</taxon>
        <taxon>Triticodae</taxon>
        <taxon>Triticeae</taxon>
        <taxon>Triticinae</taxon>
        <taxon>Triticum</taxon>
    </lineage>
</organism>
<dbReference type="EC" id="4.2.1.19" evidence="1"/>
<dbReference type="RefSeq" id="XP_044459008.1">
    <property type="nucleotide sequence ID" value="XM_044603073.1"/>
</dbReference>
<dbReference type="SMR" id="W5AWH5"/>
<dbReference type="STRING" id="4565.W5AWH5"/>
<dbReference type="PaxDb" id="4565-Traes_2AL_BF1F0B29A.2"/>
<dbReference type="EnsemblPlants" id="TraesARI2A03G00784070.1">
    <property type="protein sequence ID" value="TraesARI2A03G00784070.1"/>
    <property type="gene ID" value="TraesARI2A03G00784070"/>
</dbReference>
<dbReference type="EnsemblPlants" id="TraesCS2A02G459600.1">
    <property type="protein sequence ID" value="TraesCS2A02G459600.1"/>
    <property type="gene ID" value="TraesCS2A02G459600"/>
</dbReference>
<dbReference type="EnsemblPlants" id="TraesCS2A03G1084800.4">
    <property type="protein sequence ID" value="TraesCS2A03G1084800.4.CDS"/>
    <property type="gene ID" value="TraesCS2A03G1084800"/>
</dbReference>
<dbReference type="EnsemblPlants" id="TraesJAG2A03G00775640.1">
    <property type="protein sequence ID" value="TraesJAG2A03G00775640.1"/>
    <property type="gene ID" value="TraesJAG2A03G00775640"/>
</dbReference>
<dbReference type="EnsemblPlants" id="TraesJUL2A03G00780280.1">
    <property type="protein sequence ID" value="TraesJUL2A03G00780280.1"/>
    <property type="gene ID" value="TraesJUL2A03G00780280"/>
</dbReference>
<dbReference type="EnsemblPlants" id="TraesKAR2A01G0445070.1">
    <property type="protein sequence ID" value="cds.TraesKAR2A01G0445070.1"/>
    <property type="gene ID" value="TraesKAR2A01G0445070"/>
</dbReference>
<dbReference type="EnsemblPlants" id="TraesLAC2A03G00779580.1">
    <property type="protein sequence ID" value="TraesLAC2A03G00779580.1"/>
    <property type="gene ID" value="TraesLAC2A03G00779580"/>
</dbReference>
<dbReference type="EnsemblPlants" id="TraesLDM2A03G00778360.1">
    <property type="protein sequence ID" value="TraesLDM2A03G00778360.1"/>
    <property type="gene ID" value="TraesLDM2A03G00778360"/>
</dbReference>
<dbReference type="EnsemblPlants" id="TraesMAC2A03G00774550.1">
    <property type="protein sequence ID" value="TraesMAC2A03G00774550.1"/>
    <property type="gene ID" value="TraesMAC2A03G00774550"/>
</dbReference>
<dbReference type="EnsemblPlants" id="TraesNOR2A03G00785800.1">
    <property type="protein sequence ID" value="TraesNOR2A03G00785800.1"/>
    <property type="gene ID" value="TraesNOR2A03G00785800"/>
</dbReference>
<dbReference type="EnsemblPlants" id="TraesPARA_EIv1.0_0357780.1">
    <property type="protein sequence ID" value="TraesPARA_EIv1.0_0357780.1.CDS"/>
    <property type="gene ID" value="TraesPARA_EIv1.0_0357780"/>
</dbReference>
<dbReference type="EnsemblPlants" id="TraesRN2A0101070900.4">
    <property type="protein sequence ID" value="TraesRN2A0101070900.4"/>
    <property type="gene ID" value="TraesRN2A0101070900"/>
</dbReference>
<dbReference type="EnsemblPlants" id="TraesROB_scaffold_054236_01G000100.1">
    <property type="protein sequence ID" value="TraesROB_scaffold_054236_01G000100.1"/>
    <property type="gene ID" value="TraesROB_scaffold_054236_01G000100"/>
</dbReference>
<dbReference type="EnsemblPlants" id="TraesSTA2A03G00773820.1">
    <property type="protein sequence ID" value="TraesSTA2A03G00773820.1"/>
    <property type="gene ID" value="TraesSTA2A03G00773820"/>
</dbReference>
<dbReference type="EnsemblPlants" id="TraesWEE_scaffold_025508_01G000300.1">
    <property type="protein sequence ID" value="TraesWEE_scaffold_025508_01G000300.1"/>
    <property type="gene ID" value="TraesWEE_scaffold_025508_01G000300"/>
</dbReference>
<dbReference type="GeneID" id="123190436"/>
<dbReference type="Gramene" id="TraesARI2A03G00784070.1">
    <property type="protein sequence ID" value="TraesARI2A03G00784070.1"/>
    <property type="gene ID" value="TraesARI2A03G00784070"/>
</dbReference>
<dbReference type="Gramene" id="TraesCS2A02G459600.1">
    <property type="protein sequence ID" value="TraesCS2A02G459600.1"/>
    <property type="gene ID" value="TraesCS2A02G459600"/>
</dbReference>
<dbReference type="Gramene" id="TraesCS2A03G1084800.4">
    <property type="protein sequence ID" value="TraesCS2A03G1084800.4.CDS"/>
    <property type="gene ID" value="TraesCS2A03G1084800"/>
</dbReference>
<dbReference type="Gramene" id="TraesJAG2A03G00775640.1">
    <property type="protein sequence ID" value="TraesJAG2A03G00775640.1"/>
    <property type="gene ID" value="TraesJAG2A03G00775640"/>
</dbReference>
<dbReference type="Gramene" id="TraesJUL2A03G00780280.1">
    <property type="protein sequence ID" value="TraesJUL2A03G00780280.1"/>
    <property type="gene ID" value="TraesJUL2A03G00780280"/>
</dbReference>
<dbReference type="Gramene" id="TraesKAR2A01G0445070.1">
    <property type="protein sequence ID" value="cds.TraesKAR2A01G0445070.1"/>
    <property type="gene ID" value="TraesKAR2A01G0445070"/>
</dbReference>
<dbReference type="Gramene" id="TraesLAC2A03G00779580.1">
    <property type="protein sequence ID" value="TraesLAC2A03G00779580.1"/>
    <property type="gene ID" value="TraesLAC2A03G00779580"/>
</dbReference>
<dbReference type="Gramene" id="TraesLDM2A03G00778360.1">
    <property type="protein sequence ID" value="TraesLDM2A03G00778360.1"/>
    <property type="gene ID" value="TraesLDM2A03G00778360"/>
</dbReference>
<dbReference type="Gramene" id="TraesMAC2A03G00774550.1">
    <property type="protein sequence ID" value="TraesMAC2A03G00774550.1"/>
    <property type="gene ID" value="TraesMAC2A03G00774550"/>
</dbReference>
<dbReference type="Gramene" id="TraesNOR2A03G00785800.1">
    <property type="protein sequence ID" value="TraesNOR2A03G00785800.1"/>
    <property type="gene ID" value="TraesNOR2A03G00785800"/>
</dbReference>
<dbReference type="Gramene" id="TraesPARA_EIv1.0_0357780.1">
    <property type="protein sequence ID" value="TraesPARA_EIv1.0_0357780.1.CDS"/>
    <property type="gene ID" value="TraesPARA_EIv1.0_0357780"/>
</dbReference>
<dbReference type="Gramene" id="TraesRN2A0101070900.4">
    <property type="protein sequence ID" value="TraesRN2A0101070900.4"/>
    <property type="gene ID" value="TraesRN2A0101070900"/>
</dbReference>
<dbReference type="Gramene" id="TraesROB_scaffold_054236_01G000100.1">
    <property type="protein sequence ID" value="TraesROB_scaffold_054236_01G000100.1"/>
    <property type="gene ID" value="TraesROB_scaffold_054236_01G000100"/>
</dbReference>
<dbReference type="Gramene" id="TraesSTA2A03G00773820.1">
    <property type="protein sequence ID" value="TraesSTA2A03G00773820.1"/>
    <property type="gene ID" value="TraesSTA2A03G00773820"/>
</dbReference>
<dbReference type="Gramene" id="TraesWEE_scaffold_025508_01G000300.1">
    <property type="protein sequence ID" value="TraesWEE_scaffold_025508_01G000300.1"/>
    <property type="gene ID" value="TraesWEE_scaffold_025508_01G000300"/>
</dbReference>
<dbReference type="eggNOG" id="KOG3143">
    <property type="taxonomic scope" value="Eukaryota"/>
</dbReference>
<dbReference type="HOGENOM" id="CLU_044308_1_1_1"/>
<dbReference type="OMA" id="RPRYLRM"/>
<dbReference type="OrthoDB" id="447729at2759"/>
<dbReference type="UniPathway" id="UPA00031">
    <property type="reaction ID" value="UER00011"/>
</dbReference>
<dbReference type="Proteomes" id="UP000019116">
    <property type="component" value="Chromosome 2A"/>
</dbReference>
<dbReference type="ExpressionAtlas" id="W5AWH5">
    <property type="expression patterns" value="baseline and differential"/>
</dbReference>
<dbReference type="GO" id="GO:0009507">
    <property type="term" value="C:chloroplast"/>
    <property type="evidence" value="ECO:0007669"/>
    <property type="project" value="UniProtKB-SubCell"/>
</dbReference>
<dbReference type="GO" id="GO:0004424">
    <property type="term" value="F:imidazoleglycerol-phosphate dehydratase activity"/>
    <property type="evidence" value="ECO:0000318"/>
    <property type="project" value="GO_Central"/>
</dbReference>
<dbReference type="GO" id="GO:0046872">
    <property type="term" value="F:metal ion binding"/>
    <property type="evidence" value="ECO:0007669"/>
    <property type="project" value="UniProtKB-KW"/>
</dbReference>
<dbReference type="GO" id="GO:0000105">
    <property type="term" value="P:L-histidine biosynthetic process"/>
    <property type="evidence" value="ECO:0000318"/>
    <property type="project" value="GO_Central"/>
</dbReference>
<dbReference type="CDD" id="cd07914">
    <property type="entry name" value="IGPD"/>
    <property type="match status" value="1"/>
</dbReference>
<dbReference type="FunFam" id="3.30.230.40:FF:000002">
    <property type="entry name" value="Imidazoleglycerol-phosphate dehydratase"/>
    <property type="match status" value="1"/>
</dbReference>
<dbReference type="FunFam" id="3.30.230.40:FF:000003">
    <property type="entry name" value="Imidazoleglycerol-phosphate dehydratase HisB"/>
    <property type="match status" value="1"/>
</dbReference>
<dbReference type="Gene3D" id="3.30.230.40">
    <property type="entry name" value="Imidazole glycerol phosphate dehydratase, domain 1"/>
    <property type="match status" value="2"/>
</dbReference>
<dbReference type="HAMAP" id="MF_00076">
    <property type="entry name" value="HisB"/>
    <property type="match status" value="1"/>
</dbReference>
<dbReference type="InterPro" id="IPR038494">
    <property type="entry name" value="IGPD_sf"/>
</dbReference>
<dbReference type="InterPro" id="IPR000807">
    <property type="entry name" value="ImidazoleglycerolP_deHydtase"/>
</dbReference>
<dbReference type="InterPro" id="IPR020565">
    <property type="entry name" value="ImidazoleglycerP_deHydtase_CS"/>
</dbReference>
<dbReference type="InterPro" id="IPR020568">
    <property type="entry name" value="Ribosomal_Su5_D2-typ_SF"/>
</dbReference>
<dbReference type="NCBIfam" id="NF002108">
    <property type="entry name" value="PRK00951.1-3"/>
    <property type="match status" value="1"/>
</dbReference>
<dbReference type="NCBIfam" id="NF002111">
    <property type="entry name" value="PRK00951.2-1"/>
    <property type="match status" value="1"/>
</dbReference>
<dbReference type="NCBIfam" id="NF002114">
    <property type="entry name" value="PRK00951.2-4"/>
    <property type="match status" value="1"/>
</dbReference>
<dbReference type="PANTHER" id="PTHR23133:SF2">
    <property type="entry name" value="IMIDAZOLEGLYCEROL-PHOSPHATE DEHYDRATASE"/>
    <property type="match status" value="1"/>
</dbReference>
<dbReference type="PANTHER" id="PTHR23133">
    <property type="entry name" value="IMIDAZOLEGLYCEROL-PHOSPHATE DEHYDRATASE HIS7"/>
    <property type="match status" value="1"/>
</dbReference>
<dbReference type="Pfam" id="PF00475">
    <property type="entry name" value="IGPD"/>
    <property type="match status" value="1"/>
</dbReference>
<dbReference type="SUPFAM" id="SSF54211">
    <property type="entry name" value="Ribosomal protein S5 domain 2-like"/>
    <property type="match status" value="2"/>
</dbReference>
<dbReference type="PROSITE" id="PS00954">
    <property type="entry name" value="IGP_DEHYDRATASE_1"/>
    <property type="match status" value="1"/>
</dbReference>
<dbReference type="PROSITE" id="PS00955">
    <property type="entry name" value="IGP_DEHYDRATASE_2"/>
    <property type="match status" value="1"/>
</dbReference>
<feature type="transit peptide" description="Chloroplast" evidence="2">
    <location>
        <begin position="1"/>
        <end position="51"/>
    </location>
</feature>
<feature type="chain" id="PRO_0000445484" description="Imidazoleglycerol-phosphate dehydratase 3, chloroplastic">
    <location>
        <begin position="52"/>
        <end position="269"/>
    </location>
</feature>
<feature type="binding site" evidence="1">
    <location>
        <position position="83"/>
    </location>
    <ligand>
        <name>substrate</name>
    </ligand>
</feature>
<feature type="binding site" evidence="1">
    <location>
        <begin position="109"/>
        <end position="117"/>
    </location>
    <ligand>
        <name>substrate</name>
    </ligand>
</feature>
<feature type="binding site" evidence="1">
    <location>
        <position position="109"/>
    </location>
    <ligand>
        <name>Mn(2+)</name>
        <dbReference type="ChEBI" id="CHEBI:29035"/>
        <label>1</label>
    </ligand>
</feature>
<feature type="binding site" evidence="1">
    <location>
        <begin position="135"/>
        <end position="139"/>
    </location>
    <ligand>
        <name>substrate</name>
    </ligand>
</feature>
<feature type="binding site" evidence="1">
    <location>
        <position position="135"/>
    </location>
    <ligand>
        <name>Mn(2+)</name>
        <dbReference type="ChEBI" id="CHEBI:29035"/>
        <label>2</label>
    </ligand>
</feature>
<feature type="binding site" evidence="1">
    <location>
        <position position="136"/>
    </location>
    <ligand>
        <name>Mn(2+)</name>
        <dbReference type="ChEBI" id="CHEBI:29035"/>
        <label>1</label>
    </ligand>
</feature>
<feature type="binding site" evidence="1">
    <location>
        <position position="139"/>
    </location>
    <ligand>
        <name>Mn(2+)</name>
        <dbReference type="ChEBI" id="CHEBI:29035"/>
        <label>2</label>
    </ligand>
</feature>
<feature type="binding site" evidence="1">
    <location>
        <position position="161"/>
    </location>
    <ligand>
        <name>substrate</name>
    </ligand>
</feature>
<feature type="binding site" evidence="1">
    <location>
        <position position="183"/>
    </location>
    <ligand>
        <name>substrate</name>
    </ligand>
</feature>
<feature type="binding site" evidence="1">
    <location>
        <position position="207"/>
    </location>
    <ligand>
        <name>Mn(2+)</name>
        <dbReference type="ChEBI" id="CHEBI:29035"/>
        <label>2</label>
    </ligand>
</feature>
<feature type="binding site" evidence="1">
    <location>
        <begin position="231"/>
        <end position="239"/>
    </location>
    <ligand>
        <name>substrate</name>
    </ligand>
</feature>
<feature type="binding site" evidence="1">
    <location>
        <position position="231"/>
    </location>
    <ligand>
        <name>Mn(2+)</name>
        <dbReference type="ChEBI" id="CHEBI:29035"/>
        <label>1</label>
    </ligand>
</feature>
<feature type="binding site" evidence="1">
    <location>
        <position position="232"/>
    </location>
    <ligand>
        <name>Mn(2+)</name>
        <dbReference type="ChEBI" id="CHEBI:29035"/>
        <label>2</label>
    </ligand>
</feature>
<feature type="binding site" evidence="1">
    <location>
        <position position="235"/>
    </location>
    <ligand>
        <name>Mn(2+)</name>
        <dbReference type="ChEBI" id="CHEBI:29035"/>
        <label>1</label>
    </ligand>
</feature>
<feature type="binding site" evidence="1">
    <location>
        <begin position="261"/>
        <end position="263"/>
    </location>
    <ligand>
        <name>substrate</name>
    </ligand>
</feature>
<reference key="1">
    <citation type="journal article" date="2012" name="Nature">
        <title>Analysis of the bread wheat genome using whole-genome shotgun sequencing.</title>
        <authorList>
            <person name="Brenchley R."/>
            <person name="Spannagl M."/>
            <person name="Pfeifer M."/>
            <person name="Barker G.L."/>
            <person name="D'Amore R."/>
            <person name="Allen A.M."/>
            <person name="McKenzie N."/>
            <person name="Kramer M."/>
            <person name="Kerhornou A."/>
            <person name="Bolser D."/>
            <person name="Kay S."/>
            <person name="Waite D."/>
            <person name="Trick M."/>
            <person name="Bancroft I."/>
            <person name="Gu Y."/>
            <person name="Huo N."/>
            <person name="Luo M.C."/>
            <person name="Sehgal S."/>
            <person name="Gill B."/>
            <person name="Kianian S."/>
            <person name="Anderson O."/>
            <person name="Kersey P."/>
            <person name="Dvorak J."/>
            <person name="McCombie W.R."/>
            <person name="Hall A."/>
            <person name="Mayer K.F."/>
            <person name="Edwards K.J."/>
            <person name="Bevan M.W."/>
            <person name="Hall N."/>
        </authorList>
    </citation>
    <scope>NUCLEOTIDE SEQUENCE [LARGE SCALE GENOMIC DNA]</scope>
    <source>
        <strain>cv. Chinese Spring</strain>
    </source>
</reference>
<name>HIS7C_WHEAT</name>
<accession>W5AWH5</accession>
<protein>
    <recommendedName>
        <fullName>Imidazoleglycerol-phosphate dehydratase 3, chloroplastic</fullName>
        <shortName>IGPD 3</shortName>
        <ecNumber evidence="1">4.2.1.19</ecNumber>
    </recommendedName>
</protein>
<comment type="catalytic activity">
    <reaction evidence="1">
        <text>D-erythro-1-(imidazol-4-yl)glycerol 3-phosphate = 3-(imidazol-4-yl)-2-oxopropyl phosphate + H2O</text>
        <dbReference type="Rhea" id="RHEA:11040"/>
        <dbReference type="ChEBI" id="CHEBI:15377"/>
        <dbReference type="ChEBI" id="CHEBI:57766"/>
        <dbReference type="ChEBI" id="CHEBI:58278"/>
        <dbReference type="EC" id="4.2.1.19"/>
    </reaction>
</comment>
<comment type="cofactor">
    <cofactor evidence="1">
        <name>Mn(2+)</name>
        <dbReference type="ChEBI" id="CHEBI:29035"/>
    </cofactor>
    <text evidence="1">Binds 2 manganese ions per subunit.</text>
</comment>
<comment type="pathway">
    <text evidence="1">Amino-acid biosynthesis; L-histidine biosynthesis; L-histidine from 5-phospho-alpha-D-ribose 1-diphosphate: step 6/9.</text>
</comment>
<comment type="subcellular location">
    <subcellularLocation>
        <location evidence="2">Plastid</location>
        <location evidence="2">Chloroplast</location>
    </subcellularLocation>
</comment>
<comment type="similarity">
    <text evidence="3">Belongs to the imidazoleglycerol-phosphate dehydratase family.</text>
</comment>